<evidence type="ECO:0000255" key="1">
    <source>
        <dbReference type="HAMAP-Rule" id="MF_00048"/>
    </source>
</evidence>
<sequence length="126" mass="14586">MPKHNKLLGAFGEAYAARWLATRGYIIITRNWRRATGEIDIIAQQDDTIVFVEVKTLRCTSYADLAIIVGKRKQKRICETAKHFLASAREYNHMCARFDVIVLRSDPFRRQDVDIVHLPHAFEDLV</sequence>
<gene>
    <name type="ordered locus">TPASS_0913</name>
</gene>
<organism>
    <name type="scientific">Treponema pallidum subsp. pallidum (strain SS14)</name>
    <dbReference type="NCBI Taxonomy" id="455434"/>
    <lineage>
        <taxon>Bacteria</taxon>
        <taxon>Pseudomonadati</taxon>
        <taxon>Spirochaetota</taxon>
        <taxon>Spirochaetia</taxon>
        <taxon>Spirochaetales</taxon>
        <taxon>Treponemataceae</taxon>
        <taxon>Treponema</taxon>
    </lineage>
</organism>
<accession>B2S4F0</accession>
<feature type="chain" id="PRO_1000091271" description="UPF0102 protein TPASS_0913">
    <location>
        <begin position="1"/>
        <end position="126"/>
    </location>
</feature>
<name>Y913_TREPS</name>
<reference key="1">
    <citation type="journal article" date="2008" name="BMC Microbiol.">
        <title>Complete genome sequence of Treponema pallidum ssp. pallidum strain SS14 determined with oligonucleotide arrays.</title>
        <authorList>
            <person name="Matejkova P."/>
            <person name="Strouhal M."/>
            <person name="Smajs D."/>
            <person name="Norris S.J."/>
            <person name="Palzkill T."/>
            <person name="Petrosino J.F."/>
            <person name="Sodergren E."/>
            <person name="Norton J.E."/>
            <person name="Singh J."/>
            <person name="Richmond T.A."/>
            <person name="Molla M.N."/>
            <person name="Albert T.J."/>
            <person name="Weinstock G.M."/>
        </authorList>
    </citation>
    <scope>NUCLEOTIDE SEQUENCE [LARGE SCALE GENOMIC DNA]</scope>
    <source>
        <strain>SS14</strain>
    </source>
</reference>
<proteinExistence type="inferred from homology"/>
<comment type="similarity">
    <text evidence="1">Belongs to the UPF0102 family.</text>
</comment>
<protein>
    <recommendedName>
        <fullName evidence="1">UPF0102 protein TPASS_0913</fullName>
    </recommendedName>
</protein>
<dbReference type="EMBL" id="CP000805">
    <property type="protein sequence ID" value="ACD71329.1"/>
    <property type="molecule type" value="Genomic_DNA"/>
</dbReference>
<dbReference type="RefSeq" id="WP_010882356.1">
    <property type="nucleotide sequence ID" value="NC_021508.1"/>
</dbReference>
<dbReference type="SMR" id="B2S4F0"/>
<dbReference type="KEGG" id="tpp:TPASS_0913"/>
<dbReference type="PATRIC" id="fig|455434.6.peg.899"/>
<dbReference type="Proteomes" id="UP000001202">
    <property type="component" value="Chromosome"/>
</dbReference>
<dbReference type="GO" id="GO:0003676">
    <property type="term" value="F:nucleic acid binding"/>
    <property type="evidence" value="ECO:0007669"/>
    <property type="project" value="InterPro"/>
</dbReference>
<dbReference type="CDD" id="cd20736">
    <property type="entry name" value="PoNe_Nuclease"/>
    <property type="match status" value="1"/>
</dbReference>
<dbReference type="Gene3D" id="3.40.1350.10">
    <property type="match status" value="1"/>
</dbReference>
<dbReference type="HAMAP" id="MF_00048">
    <property type="entry name" value="UPF0102"/>
    <property type="match status" value="1"/>
</dbReference>
<dbReference type="InterPro" id="IPR011335">
    <property type="entry name" value="Restrct_endonuc-II-like"/>
</dbReference>
<dbReference type="InterPro" id="IPR011856">
    <property type="entry name" value="tRNA_endonuc-like_dom_sf"/>
</dbReference>
<dbReference type="InterPro" id="IPR003509">
    <property type="entry name" value="UPF0102_YraN-like"/>
</dbReference>
<dbReference type="NCBIfam" id="NF009150">
    <property type="entry name" value="PRK12497.1-3"/>
    <property type="match status" value="1"/>
</dbReference>
<dbReference type="NCBIfam" id="TIGR00252">
    <property type="entry name" value="YraN family protein"/>
    <property type="match status" value="1"/>
</dbReference>
<dbReference type="PANTHER" id="PTHR34039">
    <property type="entry name" value="UPF0102 PROTEIN YRAN"/>
    <property type="match status" value="1"/>
</dbReference>
<dbReference type="PANTHER" id="PTHR34039:SF1">
    <property type="entry name" value="UPF0102 PROTEIN YRAN"/>
    <property type="match status" value="1"/>
</dbReference>
<dbReference type="Pfam" id="PF02021">
    <property type="entry name" value="UPF0102"/>
    <property type="match status" value="1"/>
</dbReference>
<dbReference type="SUPFAM" id="SSF52980">
    <property type="entry name" value="Restriction endonuclease-like"/>
    <property type="match status" value="1"/>
</dbReference>